<sequence>MVSNPVHGLPFLPGTSFKDSTKTAFHRSQTLSYRNGYAIVRRPTVGIGGDRLQFNQLSQAELDELASKAPVLTYGQPKQAPPADFIPAHVAFDKKVLKFDAYFQEDVPMSTEEQYRIRQVNIYYYLEDDSMSVIEPVVENSGILQGKLIKRQRLAKNDRGDHYHWKDLNRGINITIYGKTFRVVDCDQFTQVFLESQGIELNPPEKMALDPYTELRKQPLRKYVTPSDFDQLKQFLTFDKQVLRFYAIWDDTDSMYGECRTYIIHYYLMDDTVEIREVHERNDGRDPFPLLMNRQRVPKVLVENAKNFPQCVLEISDQEVLEWYTAKDFIVGKSLTILGRTFFIYDCDPFTRRYYKEKFGITDLPRIDVSKREPPPVKQELPPYNGFGLVEDSAQNCFALIPKAPKKDVIKMLVNDNKVLRYLAVLESPIPEDKDRRFVFSYFLATDMISIFEPPVRNSGIIGGKYLGRTKVVKPYSTVDNPVYYGPSDFFIGAVIEVFGHRFIILDTDEYVLKYMESNAAQYSPEALASIQNHVRKREAPAPEAESKQTEKDPGVQELEALIDTIQKQLKDHSCKDNIREAFQIYDKEASGYVDRDMFFKICESLNVPVDDSLVKELIRMCSHGEGKINYYNFVRAFSN</sequence>
<comment type="function">
    <text evidence="5 9 12 13 14">Microtubule inner protein (MIP) part of the dynein-decorated doublet microtubules (DMTs) in cilia axoneme, which is required for motile cilia beating (PubMed:36191189). Microtubule-associated protein which regulates cell division and neuronal migration during cortical development (PubMed:19734894, PubMed:28370826). Necessary for radial and tangential cell migration during brain development, possibly acting as a regulator of cell morphology and process formation during migration (PubMed:22926142). May enhance calcium influx through CACNA1E and stimulate programmed cell death (PubMed:15258581, PubMed:19734894, PubMed:22926142, PubMed:28370826).</text>
</comment>
<comment type="subunit">
    <text evidence="1 5 9">Microtubule inner protein component of sperm flagellar doublet microtubules (By similarity). Interacts with the C-terminus of CACNA1E (PubMed:15258581). Interacts with alpha-tubulin (PubMed:19734894).</text>
</comment>
<comment type="interaction">
    <interactant intactId="EBI-743105">
        <id>Q5JVL4</id>
    </interactant>
    <interactant intactId="EBI-349900">
        <id>Q7Z569</id>
        <label>BRAP</label>
    </interactant>
    <organismsDiffer>false</organismsDiffer>
    <experiments>3</experiments>
</comment>
<comment type="interaction">
    <interactant intactId="EBI-743105">
        <id>Q5JVL4</id>
    </interactant>
    <interactant intactId="EBI-739580">
        <id>Q13137</id>
        <label>CALCOCO2</label>
    </interactant>
    <organismsDiffer>false</organismsDiffer>
    <experiments>3</experiments>
</comment>
<comment type="interaction">
    <interactant intactId="EBI-743105">
        <id>Q5JVL4</id>
    </interactant>
    <interactant intactId="EBI-11901329">
        <id>Q6P656</id>
        <label>CFAP161</label>
    </interactant>
    <organismsDiffer>false</organismsDiffer>
    <experiments>5</experiments>
</comment>
<comment type="interaction">
    <interactant intactId="EBI-743105">
        <id>Q5JVL4</id>
    </interactant>
    <interactant intactId="EBI-743375">
        <id>Q9NX63</id>
        <label>CHCHD3</label>
    </interactant>
    <organismsDiffer>false</organismsDiffer>
    <experiments>3</experiments>
</comment>
<comment type="interaction">
    <interactant intactId="EBI-743105">
        <id>Q5JVL4</id>
    </interactant>
    <interactant intactId="EBI-12155483">
        <id>Q9H1P6</id>
        <label>CIMIP1</label>
    </interactant>
    <organismsDiffer>false</organismsDiffer>
    <experiments>3</experiments>
</comment>
<comment type="interaction">
    <interactant intactId="EBI-743105">
        <id>Q5JVL4</id>
    </interactant>
    <interactant intactId="EBI-2349927">
        <id>Q5JST6</id>
        <label>EFHC2</label>
    </interactant>
    <organismsDiffer>false</organismsDiffer>
    <experiments>6</experiments>
</comment>
<comment type="interaction">
    <interactant intactId="EBI-743105">
        <id>Q5JVL4</id>
    </interactant>
    <interactant intactId="EBI-301024">
        <id>Q9NRA8</id>
        <label>EIF4ENIF1</label>
    </interactant>
    <organismsDiffer>false</organismsDiffer>
    <experiments>9</experiments>
</comment>
<comment type="interaction">
    <interactant intactId="EBI-743105">
        <id>Q5JVL4</id>
    </interactant>
    <interactant intactId="EBI-11976595">
        <id>Q8IXW7</id>
        <label>FMR1</label>
    </interactant>
    <organismsDiffer>false</organismsDiffer>
    <experiments>3</experiments>
</comment>
<comment type="interaction">
    <interactant intactId="EBI-743105">
        <id>Q5JVL4</id>
    </interactant>
    <interactant intactId="EBI-448187">
        <id>O75293</id>
        <label>GADD45B</label>
    </interactant>
    <organismsDiffer>false</organismsDiffer>
    <experiments>5</experiments>
</comment>
<comment type="interaction">
    <interactant intactId="EBI-743105">
        <id>Q5JVL4</id>
    </interactant>
    <interactant intactId="EBI-7960826">
        <id>Q8NHY3</id>
        <label>GAS2L2</label>
    </interactant>
    <organismsDiffer>false</organismsDiffer>
    <experiments>3</experiments>
</comment>
<comment type="interaction">
    <interactant intactId="EBI-743105">
        <id>Q5JVL4</id>
    </interactant>
    <interactant intactId="EBI-618309">
        <id>Q08379</id>
        <label>GOLGA2</label>
    </interactant>
    <organismsDiffer>false</organismsDiffer>
    <experiments>3</experiments>
</comment>
<comment type="interaction">
    <interactant intactId="EBI-743105">
        <id>Q5JVL4</id>
    </interactant>
    <interactant intactId="EBI-748420">
        <id>Q9NSC5</id>
        <label>HOMER3</label>
    </interactant>
    <organismsDiffer>false</organismsDiffer>
    <experiments>3</experiments>
</comment>
<comment type="interaction">
    <interactant intactId="EBI-743105">
        <id>Q5JVL4</id>
    </interactant>
    <interactant intactId="EBI-8638439">
        <id>Q8IYA8</id>
        <label>IHO1</label>
    </interactant>
    <organismsDiffer>false</organismsDiffer>
    <experiments>3</experiments>
</comment>
<comment type="interaction">
    <interactant intactId="EBI-743105">
        <id>Q5JVL4</id>
    </interactant>
    <interactant intactId="EBI-747204">
        <id>Q9UKT9</id>
        <label>IKZF3</label>
    </interactant>
    <organismsDiffer>false</organismsDiffer>
    <experiments>13</experiments>
</comment>
<comment type="interaction">
    <interactant intactId="EBI-743105">
        <id>Q5JVL4</id>
    </interactant>
    <interactant intactId="EBI-747481">
        <id>Q9NV31</id>
        <label>IMP3</label>
    </interactant>
    <organismsDiffer>false</organismsDiffer>
    <experiments>3</experiments>
</comment>
<comment type="interaction">
    <interactant intactId="EBI-743105">
        <id>Q5JVL4</id>
    </interactant>
    <interactant intactId="EBI-712105">
        <id>Q13352</id>
        <label>ITGB3BP</label>
    </interactant>
    <organismsDiffer>false</organismsDiffer>
    <experiments>3</experiments>
</comment>
<comment type="interaction">
    <interactant intactId="EBI-743105">
        <id>Q5JVL4</id>
    </interactant>
    <interactant intactId="EBI-12810853">
        <id>Q8TAV5</id>
        <label>KCNJ5-AS1</label>
    </interactant>
    <organismsDiffer>false</organismsDiffer>
    <experiments>3</experiments>
</comment>
<comment type="interaction">
    <interactant intactId="EBI-743105">
        <id>Q5JVL4</id>
    </interactant>
    <interactant intactId="EBI-741463">
        <id>Q8WVF5</id>
        <label>KCTD4</label>
    </interactant>
    <organismsDiffer>false</organismsDiffer>
    <experiments>6</experiments>
</comment>
<comment type="interaction">
    <interactant intactId="EBI-743105">
        <id>Q5JVL4</id>
    </interactant>
    <interactant intactId="EBI-948266">
        <id>O14901</id>
        <label>KLF11</label>
    </interactant>
    <organismsDiffer>false</organismsDiffer>
    <experiments>3</experiments>
</comment>
<comment type="interaction">
    <interactant intactId="EBI-743105">
        <id>Q5JVL4</id>
    </interactant>
    <interactant intactId="EBI-739566">
        <id>P19012</id>
        <label>KRT15</label>
    </interactant>
    <organismsDiffer>false</organismsDiffer>
    <experiments>3</experiments>
</comment>
<comment type="interaction">
    <interactant intactId="EBI-743105">
        <id>Q5JVL4</id>
    </interactant>
    <interactant intactId="EBI-297888">
        <id>P05783</id>
        <label>KRT18</label>
    </interactant>
    <organismsDiffer>false</organismsDiffer>
    <experiments>3</experiments>
</comment>
<comment type="interaction">
    <interactant intactId="EBI-743105">
        <id>Q5JVL4</id>
    </interactant>
    <interactant intactId="EBI-2949715">
        <id>O95678</id>
        <label>KRT75</label>
    </interactant>
    <organismsDiffer>false</organismsDiffer>
    <experiments>3</experiments>
</comment>
<comment type="interaction">
    <interactant intactId="EBI-743105">
        <id>Q5JVL4</id>
    </interactant>
    <interactant intactId="EBI-11959475">
        <id>P25791-3</id>
        <label>LMO2</label>
    </interactant>
    <organismsDiffer>false</organismsDiffer>
    <experiments>3</experiments>
</comment>
<comment type="interaction">
    <interactant intactId="EBI-743105">
        <id>Q5JVL4</id>
    </interactant>
    <interactant intactId="EBI-2350424">
        <id>Q9BV99</id>
        <label>LRRC61</label>
    </interactant>
    <organismsDiffer>false</organismsDiffer>
    <experiments>3</experiments>
</comment>
<comment type="interaction">
    <interactant intactId="EBI-743105">
        <id>Q5JVL4</id>
    </interactant>
    <interactant intactId="EBI-8456413">
        <id>Q7Z304</id>
        <label>MAMDC2</label>
    </interactant>
    <organismsDiffer>false</organismsDiffer>
    <experiments>3</experiments>
</comment>
<comment type="interaction">
    <interactant intactId="EBI-743105">
        <id>Q5JVL4</id>
    </interactant>
    <interactant intactId="EBI-12516603">
        <id>Q8WWY6</id>
        <label>MBD3L1</label>
    </interactant>
    <organismsDiffer>false</organismsDiffer>
    <experiments>3</experiments>
</comment>
<comment type="interaction">
    <interactant intactId="EBI-743105">
        <id>Q5JVL4</id>
    </interactant>
    <interactant intactId="EBI-8487781">
        <id>Q8N6F8</id>
        <label>METTL27</label>
    </interactant>
    <organismsDiffer>false</organismsDiffer>
    <experiments>3</experiments>
</comment>
<comment type="interaction">
    <interactant intactId="EBI-743105">
        <id>Q5JVL4</id>
    </interactant>
    <interactant intactId="EBI-2801965">
        <id>Q5JXC2</id>
        <label>MIIP</label>
    </interactant>
    <organismsDiffer>false</organismsDiffer>
    <experiments>3</experiments>
</comment>
<comment type="interaction">
    <interactant intactId="EBI-743105">
        <id>Q5JVL4</id>
    </interactant>
    <interactant intactId="EBI-2857471">
        <id>Q6NTE8</id>
        <label>MRNIP</label>
    </interactant>
    <organismsDiffer>false</organismsDiffer>
    <experiments>3</experiments>
</comment>
<comment type="interaction">
    <interactant intactId="EBI-743105">
        <id>Q5JVL4</id>
    </interactant>
    <interactant intactId="EBI-2824497">
        <id>Q9H019</id>
        <label>MTFR1L</label>
    </interactant>
    <organismsDiffer>false</organismsDiffer>
    <experiments>3</experiments>
</comment>
<comment type="interaction">
    <interactant intactId="EBI-743105">
        <id>Q5JVL4</id>
    </interactant>
    <interactant intactId="EBI-358466">
        <id>P16083</id>
        <label>NQO2</label>
    </interactant>
    <organismsDiffer>false</organismsDiffer>
    <experiments>3</experiments>
</comment>
<comment type="interaction">
    <interactant intactId="EBI-743105">
        <id>Q5JVL4</id>
    </interactant>
    <interactant intactId="EBI-10311735">
        <id>Q9NQ35</id>
        <label>NRIP3</label>
    </interactant>
    <organismsDiffer>false</organismsDiffer>
    <experiments>3</experiments>
</comment>
<comment type="interaction">
    <interactant intactId="EBI-743105">
        <id>Q5JVL4</id>
    </interactant>
    <interactant intactId="EBI-741048">
        <id>Q7Z3B4</id>
        <label>NUP54</label>
    </interactant>
    <organismsDiffer>false</organismsDiffer>
    <experiments>3</experiments>
</comment>
<comment type="interaction">
    <interactant intactId="EBI-743105">
        <id>Q5JVL4</id>
    </interactant>
    <interactant intactId="EBI-536879">
        <id>O43482</id>
        <label>OIP5</label>
    </interactant>
    <organismsDiffer>false</organismsDiffer>
    <experiments>3</experiments>
</comment>
<comment type="interaction">
    <interactant intactId="EBI-743105">
        <id>Q5JVL4</id>
    </interactant>
    <interactant intactId="EBI-747278">
        <id>P26367</id>
        <label>PAX6</label>
    </interactant>
    <organismsDiffer>false</organismsDiffer>
    <experiments>3</experiments>
</comment>
<comment type="interaction">
    <interactant intactId="EBI-743105">
        <id>Q5JVL4</id>
    </interactant>
    <interactant intactId="EBI-301611">
        <id>P40424</id>
        <label>PBX1</label>
    </interactant>
    <organismsDiffer>false</organismsDiffer>
    <experiments>3</experiments>
</comment>
<comment type="interaction">
    <interactant intactId="EBI-743105">
        <id>Q5JVL4</id>
    </interactant>
    <interactant intactId="EBI-348489">
        <id>P40425</id>
        <label>PBX2</label>
    </interactant>
    <organismsDiffer>false</organismsDiffer>
    <experiments>3</experiments>
</comment>
<comment type="interaction">
    <interactant intactId="EBI-743105">
        <id>Q5JVL4</id>
    </interactant>
    <interactant intactId="EBI-713832">
        <id>Q6P1K2</id>
        <label>PMF1</label>
    </interactant>
    <organismsDiffer>false</organismsDiffer>
    <experiments>3</experiments>
</comment>
<comment type="interaction">
    <interactant intactId="EBI-743105">
        <id>Q5JVL4</id>
    </interactant>
    <interactant intactId="EBI-1567866">
        <id>Q6MZQ0</id>
        <label>PRR5L</label>
    </interactant>
    <organismsDiffer>false</organismsDiffer>
    <experiments>3</experiments>
</comment>
<comment type="interaction">
    <interactant intactId="EBI-743105">
        <id>Q5JVL4</id>
    </interactant>
    <interactant intactId="EBI-948278">
        <id>Q15293</id>
        <label>RCN1</label>
    </interactant>
    <organismsDiffer>false</organismsDiffer>
    <experiments>3</experiments>
</comment>
<comment type="interaction">
    <interactant intactId="EBI-743105">
        <id>Q5JVL4</id>
    </interactant>
    <interactant intactId="EBI-307352">
        <id>Q04864</id>
        <label>REL</label>
    </interactant>
    <organismsDiffer>false</organismsDiffer>
    <experiments>7</experiments>
</comment>
<comment type="interaction">
    <interactant intactId="EBI-743105">
        <id>Q5JVL4</id>
    </interactant>
    <interactant intactId="EBI-10829018">
        <id>Q04864-2</id>
        <label>REL</label>
    </interactant>
    <organismsDiffer>false</organismsDiffer>
    <experiments>6</experiments>
</comment>
<comment type="interaction">
    <interactant intactId="EBI-743105">
        <id>Q5JVL4</id>
    </interactant>
    <interactant intactId="EBI-10182375">
        <id>Q9UFD9</id>
        <label>RIMBP3</label>
    </interactant>
    <organismsDiffer>false</organismsDiffer>
    <experiments>3</experiments>
</comment>
<comment type="interaction">
    <interactant intactId="EBI-743105">
        <id>Q5JVL4</id>
    </interactant>
    <interactant intactId="EBI-13072754">
        <id>Q5SSQ6-2</id>
        <label>SAPCD1</label>
    </interactant>
    <organismsDiffer>false</organismsDiffer>
    <experiments>3</experiments>
</comment>
<comment type="interaction">
    <interactant intactId="EBI-743105">
        <id>Q5JVL4</id>
    </interactant>
    <interactant intactId="EBI-10216195">
        <id>P59797</id>
        <label>SELENOV</label>
    </interactant>
    <organismsDiffer>false</organismsDiffer>
    <experiments>3</experiments>
</comment>
<comment type="interaction">
    <interactant intactId="EBI-743105">
        <id>Q5JVL4</id>
    </interactant>
    <interactant intactId="EBI-749607">
        <id>Q9NR46</id>
        <label>SH3GLB2</label>
    </interactant>
    <organismsDiffer>false</organismsDiffer>
    <experiments>3</experiments>
</comment>
<comment type="interaction">
    <interactant intactId="EBI-743105">
        <id>Q5JVL4</id>
    </interactant>
    <interactant intactId="EBI-10269374">
        <id>Q8ND83</id>
        <label>SLAIN1</label>
    </interactant>
    <organismsDiffer>false</organismsDiffer>
    <experiments>3</experiments>
</comment>
<comment type="interaction">
    <interactant intactId="EBI-743105">
        <id>Q5JVL4</id>
    </interactant>
    <interactant intactId="EBI-1045459">
        <id>O95863</id>
        <label>SNAI1</label>
    </interactant>
    <organismsDiffer>false</organismsDiffer>
    <experiments>3</experiments>
</comment>
<comment type="interaction">
    <interactant intactId="EBI-743105">
        <id>Q5JVL4</id>
    </interactant>
    <interactant intactId="EBI-741237">
        <id>O60504</id>
        <label>SORBS3</label>
    </interactant>
    <organismsDiffer>false</organismsDiffer>
    <experiments>3</experiments>
</comment>
<comment type="interaction">
    <interactant intactId="EBI-743105">
        <id>Q5JVL4</id>
    </interactant>
    <interactant intactId="EBI-744066">
        <id>Q9UM82</id>
        <label>SPATA2</label>
    </interactant>
    <organismsDiffer>false</organismsDiffer>
    <experiments>3</experiments>
</comment>
<comment type="interaction">
    <interactant intactId="EBI-743105">
        <id>Q5JVL4</id>
    </interactant>
    <interactant intactId="EBI-2682386">
        <id>Q96PV0</id>
        <label>SYNGAP1</label>
    </interactant>
    <organismsDiffer>false</organismsDiffer>
    <experiments>3</experiments>
</comment>
<comment type="interaction">
    <interactant intactId="EBI-743105">
        <id>Q5JVL4</id>
    </interactant>
    <interactant intactId="EBI-533224">
        <id>P15884</id>
        <label>TCF4</label>
    </interactant>
    <organismsDiffer>false</organismsDiffer>
    <experiments>7</experiments>
</comment>
<comment type="interaction">
    <interactant intactId="EBI-743105">
        <id>Q5JVL4</id>
    </interactant>
    <interactant intactId="EBI-13636688">
        <id>P15884-3</id>
        <label>TCF4</label>
    </interactant>
    <organismsDiffer>false</organismsDiffer>
    <experiments>6</experiments>
</comment>
<comment type="interaction">
    <interactant intactId="EBI-743105">
        <id>Q5JVL4</id>
    </interactant>
    <interactant intactId="EBI-10180409">
        <id>Q969V4</id>
        <label>TEKT1</label>
    </interactant>
    <organismsDiffer>false</organismsDiffer>
    <experiments>3</experiments>
</comment>
<comment type="interaction">
    <interactant intactId="EBI-743105">
        <id>Q5JVL4</id>
    </interactant>
    <interactant intactId="EBI-11523345">
        <id>Q8IYF3-3</id>
        <label>TEX11</label>
    </interactant>
    <organismsDiffer>false</organismsDiffer>
    <experiments>6</experiments>
</comment>
<comment type="interaction">
    <interactant intactId="EBI-743105">
        <id>Q5JVL4</id>
    </interactant>
    <interactant intactId="EBI-11741437">
        <id>Q08117-2</id>
        <label>TLE5</label>
    </interactant>
    <organismsDiffer>false</organismsDiffer>
    <experiments>3</experiments>
</comment>
<comment type="interaction">
    <interactant intactId="EBI-743105">
        <id>Q5JVL4</id>
    </interactant>
    <interactant intactId="EBI-11952721">
        <id>Q05BL1</id>
        <label>TP53BP2</label>
    </interactant>
    <organismsDiffer>false</organismsDiffer>
    <experiments>3</experiments>
</comment>
<comment type="interaction">
    <interactant intactId="EBI-743105">
        <id>Q5JVL4</id>
    </interactant>
    <interactant intactId="EBI-355744">
        <id>Q12933</id>
        <label>TRAF2</label>
    </interactant>
    <organismsDiffer>false</organismsDiffer>
    <experiments>6</experiments>
</comment>
<comment type="interaction">
    <interactant intactId="EBI-743105">
        <id>Q5JVL4</id>
    </interactant>
    <interactant intactId="EBI-742327">
        <id>Q15654</id>
        <label>TRIP6</label>
    </interactant>
    <organismsDiffer>false</organismsDiffer>
    <experiments>3</experiments>
</comment>
<comment type="interaction">
    <interactant intactId="EBI-743105">
        <id>Q5JVL4</id>
    </interactant>
    <interactant intactId="EBI-10241197">
        <id>Q3SY00</id>
        <label>TSGA10IP</label>
    </interactant>
    <organismsDiffer>false</organismsDiffer>
    <experiments>3</experiments>
</comment>
<comment type="interaction">
    <interactant intactId="EBI-743105">
        <id>Q5JVL4</id>
    </interactant>
    <interactant intactId="EBI-8656864">
        <id>Q6PF05</id>
        <label>TTC23L</label>
    </interactant>
    <organismsDiffer>false</organismsDiffer>
    <experiments>3</experiments>
</comment>
<comment type="interaction">
    <interactant intactId="EBI-743105">
        <id>Q5JVL4</id>
    </interactant>
    <interactant intactId="EBI-2514383">
        <id>Q5T6F2</id>
        <label>UBAP2</label>
    </interactant>
    <organismsDiffer>false</organismsDiffer>
    <experiments>3</experiments>
</comment>
<comment type="interaction">
    <interactant intactId="EBI-743105">
        <id>Q5JVL4</id>
    </interactant>
    <interactant intactId="EBI-357430">
        <id>P61758</id>
        <label>VBP1</label>
    </interactant>
    <organismsDiffer>false</organismsDiffer>
    <experiments>3</experiments>
</comment>
<comment type="interaction">
    <interactant intactId="EBI-743105">
        <id>Q5JVL4</id>
    </interactant>
    <interactant intactId="EBI-1548747">
        <id>Q92558</id>
        <label>WASF1</label>
    </interactant>
    <organismsDiffer>false</organismsDiffer>
    <experiments>3</experiments>
</comment>
<comment type="interaction">
    <interactant intactId="EBI-743105">
        <id>Q5JVL4</id>
    </interactant>
    <interactant intactId="EBI-310886">
        <id>Q9P202</id>
        <label>WHRN</label>
    </interactant>
    <organismsDiffer>false</organismsDiffer>
    <experiments>3</experiments>
</comment>
<comment type="interaction">
    <interactant intactId="EBI-743105">
        <id>Q5JVL4</id>
    </interactant>
    <interactant intactId="EBI-716093">
        <id>P13994</id>
        <label>YJU2B</label>
    </interactant>
    <organismsDiffer>false</organismsDiffer>
    <experiments>3</experiments>
</comment>
<comment type="interaction">
    <interactant intactId="EBI-743105">
        <id>Q5JVL4</id>
    </interactant>
    <interactant intactId="EBI-740037">
        <id>O96006</id>
        <label>ZBED1</label>
    </interactant>
    <organismsDiffer>false</organismsDiffer>
    <experiments>6</experiments>
</comment>
<comment type="subcellular location">
    <subcellularLocation>
        <location evidence="14">Cytoplasm</location>
        <location evidence="14">Cytoskeleton</location>
        <location evidence="14">Cilium axoneme</location>
    </subcellularLocation>
    <subcellularLocation>
        <location evidence="1">Cytoplasm</location>
        <location evidence="1">Cytoskeleton</location>
        <location evidence="1">Flagellum axoneme</location>
    </subcellularLocation>
    <subcellularLocation>
        <location evidence="12">Cytoplasm</location>
        <location evidence="12">Cytoskeleton</location>
        <location evidence="12">Microtubule organizing center</location>
        <location evidence="12">Centrosome</location>
    </subcellularLocation>
    <subcellularLocation>
        <location evidence="9 12">Cytoplasm</location>
        <location evidence="9 12">Cytoskeleton</location>
        <location evidence="9 12">Spindle</location>
    </subcellularLocation>
    <subcellularLocation>
        <location evidence="13">Cytoplasm</location>
        <location evidence="13">Cytoskeleton</location>
        <location evidence="13">Spindle pole</location>
    </subcellularLocation>
</comment>
<comment type="alternative products">
    <event type="alternative splicing"/>
    <isoform>
        <id>Q5JVL4-1</id>
        <name>1</name>
        <sequence type="displayed"/>
    </isoform>
    <isoform>
        <id>Q5JVL4-2</id>
        <name>2</name>
        <sequence type="described" ref="VSP_015894 VSP_015895"/>
    </isoform>
    <isoform>
        <id>Q5JVL4-3</id>
        <name>3</name>
        <sequence type="described" ref="VSP_046107"/>
    </isoform>
</comment>
<comment type="tissue specificity">
    <text evidence="5 14">Widely expressed. Not detected in lymphocytes.</text>
</comment>
<comment type="disease" evidence="5 8 10 11 12 13">
    <disease id="DI-00615">
        <name>Juvenile myoclonic epilepsy 1</name>
        <acronym>EJM1</acronym>
        <description>A subtype of idiopathic generalized epilepsy. Patients have afebrile seizures only, with onset in adolescence (rather than in childhood) and myoclonic jerks which usually occur after awakening and are triggered by sleep deprivation and fatigue.</description>
        <dbReference type="MIM" id="254770"/>
    </disease>
    <text>Disease susceptibility is associated with variants affecting the gene represented in this entry.</text>
</comment>
<comment type="disease" evidence="7 18">
    <disease id="DI-00613">
        <name>Juvenile absence epilepsy 1</name>
        <acronym>JAE1</acronym>
        <description>A subtype of idiopathic generalized epilepsy characterized by onset occurring around puberty, absence seizures, generalized tonic-clonic seizures (GTCS), GTCS on awakening, and myoclonic seizures.</description>
        <dbReference type="MIM" id="607631"/>
    </disease>
    <text>Disease susceptibility is associated with variants affecting the gene represented in this entry.</text>
</comment>
<comment type="disease">
    <text evidence="10">Mutation Leu-229 may be a cause of intractable epilepsy of infancy. Affected individuals have seizures of multiple type, manifested as tonic, clonic, and myoclonic seizures in the neonatal period, and as tonic seizures activated frequently by sleep, and repeated frequent myoclonic seizures in later infancy. The seizures are unresponsive to numerous antiepileptic drugs, and infants die in the first years of life. Although heterozygosity for Leu-229 has been associated with relatively benign forms of epilepsy in adolescence, homozygosity for the same mutation has much more severe consequences.</text>
</comment>
<comment type="miscellaneous">
    <molecule>Isoform 2</molecule>
    <text evidence="17">May be due to intron retention.</text>
</comment>
<evidence type="ECO:0000250" key="1">
    <source>
        <dbReference type="UniProtKB" id="Q9D9T8"/>
    </source>
</evidence>
<evidence type="ECO:0000255" key="2">
    <source>
        <dbReference type="PROSITE-ProRule" id="PRU00448"/>
    </source>
</evidence>
<evidence type="ECO:0000255" key="3">
    <source>
        <dbReference type="PROSITE-ProRule" id="PRU00665"/>
    </source>
</evidence>
<evidence type="ECO:0000256" key="4">
    <source>
        <dbReference type="SAM" id="MobiDB-lite"/>
    </source>
</evidence>
<evidence type="ECO:0000269" key="5">
    <source>
    </source>
</evidence>
<evidence type="ECO:0000269" key="6">
    <source>
    </source>
</evidence>
<evidence type="ECO:0000269" key="7">
    <source>
    </source>
</evidence>
<evidence type="ECO:0000269" key="8">
    <source>
    </source>
</evidence>
<evidence type="ECO:0000269" key="9">
    <source>
    </source>
</evidence>
<evidence type="ECO:0000269" key="10">
    <source>
    </source>
</evidence>
<evidence type="ECO:0000269" key="11">
    <source>
    </source>
</evidence>
<evidence type="ECO:0000269" key="12">
    <source>
    </source>
</evidence>
<evidence type="ECO:0000269" key="13">
    <source>
    </source>
</evidence>
<evidence type="ECO:0000269" key="14">
    <source>
    </source>
</evidence>
<evidence type="ECO:0000303" key="15">
    <source>
    </source>
</evidence>
<evidence type="ECO:0000303" key="16">
    <source>
    </source>
</evidence>
<evidence type="ECO:0000305" key="17"/>
<evidence type="ECO:0000305" key="18">
    <source>
    </source>
</evidence>
<evidence type="ECO:0000312" key="19">
    <source>
        <dbReference type="HGNC" id="HGNC:16406"/>
    </source>
</evidence>
<evidence type="ECO:0007744" key="20">
    <source>
        <dbReference type="PDB" id="7UNG"/>
    </source>
</evidence>
<proteinExistence type="evidence at protein level"/>
<feature type="chain" id="PRO_0000073877" description="EF-hand domain-containing protein 1">
    <location>
        <begin position="1"/>
        <end position="640"/>
    </location>
</feature>
<feature type="domain" description="DM10 1" evidence="3">
    <location>
        <begin position="93"/>
        <end position="198"/>
    </location>
</feature>
<feature type="domain" description="DM10 2" evidence="3">
    <location>
        <begin position="239"/>
        <end position="359"/>
    </location>
</feature>
<feature type="domain" description="DM10 3" evidence="3">
    <location>
        <begin position="416"/>
        <end position="520"/>
    </location>
</feature>
<feature type="domain" description="EF-hand" evidence="2">
    <location>
        <begin position="574"/>
        <end position="609"/>
    </location>
</feature>
<feature type="region of interest" description="Required for its localization in the mitotic spindle and interaction with alpha-tubulin" evidence="9">
    <location>
        <begin position="1"/>
        <end position="45"/>
    </location>
</feature>
<feature type="region of interest" description="Disordered" evidence="4">
    <location>
        <begin position="535"/>
        <end position="554"/>
    </location>
</feature>
<feature type="compositionally biased region" description="Basic and acidic residues" evidence="4">
    <location>
        <begin position="538"/>
        <end position="554"/>
    </location>
</feature>
<feature type="splice variant" id="VSP_046107" description="In isoform 3." evidence="15">
    <original>MVSNPVHGLPFLPGTSFKDST</original>
    <variation>ML</variation>
    <location>
        <begin position="1"/>
        <end position="21"/>
    </location>
</feature>
<feature type="splice variant" id="VSP_015894" description="In isoform 2." evidence="16">
    <original>LRFYAIWDDTDSMYGECRTYIIHYYLMDDTVEIREV</original>
    <variation>SDIGTTIGLLISKCDLHLLAKGLGSCIGNYFETLQL</variation>
    <location>
        <begin position="243"/>
        <end position="278"/>
    </location>
</feature>
<feature type="splice variant" id="VSP_015895" description="In isoform 2." evidence="16">
    <location>
        <begin position="279"/>
        <end position="640"/>
    </location>
</feature>
<feature type="sequence variant" id="VAR_023619" description="In EJM1; associated in cis with H-221; reduces substantially the cell death effect; reduces partly the calcium influx; binds to CACNA1E; dbSNP:rs149055334." evidence="5">
    <original>P</original>
    <variation>T</variation>
    <location>
        <position position="77"/>
    </location>
</feature>
<feature type="sequence variant" id="VAR_079772" description="In EJM1; no effect on protein expression; defective mitotic spindle organization; defective cytokinesis; dbSNP:rs543160745." evidence="13">
    <original>H</original>
    <variation>R</variation>
    <location>
        <position position="89"/>
    </location>
</feature>
<feature type="sequence variant" id="VAR_072108" description="In EJM1; dbSNP:rs764096785." evidence="11">
    <original>R</original>
    <variation>C</variation>
    <location>
        <position position="118"/>
    </location>
</feature>
<feature type="sequence variant" id="VAR_072109" description="In EJM1; uncertain significance; dbSNP:rs745600475." evidence="11">
    <original>R</original>
    <variation>Q</variation>
    <location>
        <position position="153"/>
    </location>
</feature>
<feature type="sequence variant" id="VAR_023620" description="No effect on cell death; binds to CACNA1E as the wild type protein; does not affect subcellular location; dbSNP:rs3804506." evidence="5 7 12 13">
    <original>R</original>
    <variation>W</variation>
    <location>
        <position position="159"/>
    </location>
</feature>
<feature type="sequence variant" id="VAR_043154" description="Risk factor for JAE1; dbSNP:rs137852779." evidence="7">
    <original>I</original>
    <variation>V</variation>
    <location>
        <position position="174"/>
    </location>
</feature>
<feature type="sequence variant" id="VAR_072110" description="In EJM1; uncertain significance; dbSNP:rs200191497." evidence="11">
    <original>R</original>
    <variation>C</variation>
    <location>
        <position position="182"/>
    </location>
</feature>
<feature type="sequence variant" id="VAR_023621" description="No effect on cell death; binds to CACNA1E; dbSNP:rs3804505." evidence="5 7 8 13">
    <original>R</original>
    <variation>H</variation>
    <location>
        <position position="182"/>
    </location>
</feature>
<feature type="sequence variant" id="VAR_023622" description="In EJM1; reduces substantially the cell death effect; reduces partly the calcium influx; normally binds to CACNA1E; does not affect subcellular location; results in impaired cell migration; dbSNP:rs137852777." evidence="5 12">
    <original>D</original>
    <variation>N</variation>
    <location>
        <position position="210"/>
    </location>
</feature>
<feature type="sequence variant" id="VAR_079773" description="In dbSNP:rs139197513." evidence="13">
    <original>R</original>
    <variation>C</variation>
    <location>
        <position position="221"/>
    </location>
</feature>
<feature type="sequence variant" id="VAR_023623" description="In EJM1; associated in cis with T-77; reduces substantially the cell death effect; reduces partly the calcium influx; normally binds to CACNA1E; does not affect subcellular location; results in impaired cell migration; dbSNP:rs79761183." evidence="5 12">
    <original>R</original>
    <variation>H</variation>
    <location>
        <position position="221"/>
    </location>
</feature>
<feature type="sequence variant" id="VAR_023624" description="In EJM1; uncertain significance; also found at homozygosity in neonatal intractable epilepsy; reduces substantially the cell death effect; reduces significantly the calcium influx; normally binds to CACNA1E; does not affect subcellular location; results in impaired cell migration; dbSNP:rs137852776." evidence="5 7 8 10 12 13">
    <original>F</original>
    <variation>L</variation>
    <location>
        <position position="229"/>
    </location>
</feature>
<feature type="sequence variant" id="VAR_023625" description="In EJM1; reduces substantially the cell death effect; reduces partly the calcium influx; normally binds to CACNA1E; does not affect subcellular location; results in impaired cell migration; dbSNP:rs137852778." evidence="5 12">
    <original>D</original>
    <variation>Y</variation>
    <location>
        <position position="253"/>
    </location>
</feature>
<feature type="sequence variant" id="VAR_043155" description="Risk factor for JAE1; dbSNP:rs137852780." evidence="7">
    <original>C</original>
    <variation>Y</variation>
    <location>
        <position position="259"/>
    </location>
</feature>
<feature type="sequence variant" id="VAR_026531" description="In dbSNP:rs17851771." evidence="6">
    <original>R</original>
    <variation>I</variation>
    <location>
        <position position="285"/>
    </location>
</feature>
<feature type="sequence variant" id="VAR_043156" description="In dbSNP:rs1570624." evidence="7 13">
    <original>R</original>
    <variation>H</variation>
    <location>
        <position position="294"/>
    </location>
</feature>
<feature type="sequence variant" id="VAR_079774" description="In EJM1; no effect on protein expression; defective mitotic spindle organization; defective cytokinesis." evidence="13">
    <original>E</original>
    <variation>K</variation>
    <location>
        <position position="322"/>
    </location>
</feature>
<feature type="sequence variant" id="VAR_043157" description="In EJM1; no effect on protein expression; no effect on the spindle pole localization; defective mitotic spindle organization; defective cytokinesis; dbSNP:rs527295360." evidence="8 13">
    <original>R</original>
    <variation>W</variation>
    <location>
        <position position="353"/>
    </location>
</feature>
<feature type="sequence variant" id="VAR_079775" description="In EJM1; no effect on protein expression; defective mitotic spindle organization; defective cytokinesis; dbSNP:rs767833659." evidence="13">
    <original>Y</original>
    <variation>C</variation>
    <location>
        <position position="355"/>
    </location>
</feature>
<feature type="sequence variant" id="VAR_048666" description="In dbSNP:rs505760.">
    <original>E</original>
    <variation>K</variation>
    <location>
        <position position="357"/>
    </location>
</feature>
<feature type="sequence variant" id="VAR_079776" description="In EJM1; no effect on protein expression; defective mitotic spindle organization; defective cytokinesis; dbSNP:rs371151471." evidence="13">
    <original>R</original>
    <variation>W</variation>
    <location>
        <position position="372"/>
    </location>
</feature>
<feature type="sequence variant" id="VAR_079777" description="In EJM1; no effect on protein expression; defective mitotic spindle organization; defective cytokinesis." evidence="13">
    <original>K</original>
    <variation>E</variation>
    <location>
        <position position="378"/>
    </location>
</feature>
<feature type="sequence variant" id="VAR_043158" description="In a sporadic case of unclassified epilepsy." evidence="7">
    <original>A</original>
    <variation>S</variation>
    <location>
        <position position="394"/>
    </location>
</feature>
<feature type="sequence variant" id="VAR_079778" description="In EJM1; no effect on protein expression; defective mitotic spindle organization; defective cytokinesis; dbSNP:rs377286138." evidence="13">
    <original>R</original>
    <variation>C</variation>
    <location>
        <position position="436"/>
    </location>
</feature>
<feature type="sequence variant" id="VAR_043159" description="In dbSNP:rs1266787." evidence="7 13">
    <original>M</original>
    <variation>T</variation>
    <location>
        <position position="448"/>
    </location>
</feature>
<feature type="sequence variant" id="VAR_079779" description="In EJM1; no effect on protein expression; defective mitotic spindle organization; defective cytokinesis; dbSNP:rs779322943." evidence="13">
    <original>Y</original>
    <variation>H</variation>
    <location>
        <position position="485"/>
    </location>
</feature>
<feature type="sequence variant" id="VAR_079780" description="In EJM1; no effect on protein expression; defective mitotic spindle organization; defective cytokinesis; dbSNP:rs527539103." evidence="13">
    <original>N</original>
    <variation>S</variation>
    <location>
        <position position="519"/>
    </location>
</feature>
<feature type="sequence variant" id="VAR_079781" description="In EJM1; no effect on protein expression; defective mitotic spindle organization; defective cytokinesis; dbSNP:rs772265107." evidence="13">
    <original>V</original>
    <variation>L</variation>
    <location>
        <position position="556"/>
    </location>
</feature>
<feature type="sequence variant" id="VAR_023626" description="No effect on cell death; normally binds to CACNA1E; does not affect subcellular location; dbSNP:rs17851770." evidence="5 6 12 13">
    <original>I</original>
    <variation>L</variation>
    <location>
        <position position="619"/>
    </location>
</feature>
<feature type="sequence variant" id="VAR_079782" description="In EJM1; no effect on protein expression; defective mitotic spindle organization; defective cytokinesis; dbSNP:rs142458862." evidence="13">
    <original>I</original>
    <variation>S</variation>
    <location>
        <position position="619"/>
    </location>
</feature>
<feature type="sequence variant" id="VAR_079783" description="In EJM1; no effect on protein expression; defective mitotic spindle organization; defective cytokinesis; dbSNP:rs574948354." evidence="13">
    <original>Y</original>
    <variation>C</variation>
    <location>
        <position position="631"/>
    </location>
</feature>
<feature type="sequence conflict" description="In Ref. 2; BAG60005." evidence="17" ref="2">
    <original>N</original>
    <variation>D</variation>
    <location>
        <position position="140"/>
    </location>
</feature>
<feature type="sequence conflict" description="In Ref. 2; BAA91628." evidence="17" ref="2">
    <original>A</original>
    <variation>T</variation>
    <location>
        <position position="399"/>
    </location>
</feature>
<organism>
    <name type="scientific">Homo sapiens</name>
    <name type="common">Human</name>
    <dbReference type="NCBI Taxonomy" id="9606"/>
    <lineage>
        <taxon>Eukaryota</taxon>
        <taxon>Metazoa</taxon>
        <taxon>Chordata</taxon>
        <taxon>Craniata</taxon>
        <taxon>Vertebrata</taxon>
        <taxon>Euteleostomi</taxon>
        <taxon>Mammalia</taxon>
        <taxon>Eutheria</taxon>
        <taxon>Euarchontoglires</taxon>
        <taxon>Primates</taxon>
        <taxon>Haplorrhini</taxon>
        <taxon>Catarrhini</taxon>
        <taxon>Hominidae</taxon>
        <taxon>Homo</taxon>
    </lineage>
</organism>
<keyword id="KW-0002">3D-structure</keyword>
<keyword id="KW-0025">Alternative splicing</keyword>
<keyword id="KW-0966">Cell projection</keyword>
<keyword id="KW-0969">Cilium</keyword>
<keyword id="KW-0963">Cytoplasm</keyword>
<keyword id="KW-0206">Cytoskeleton</keyword>
<keyword id="KW-0225">Disease variant</keyword>
<keyword id="KW-0887">Epilepsy</keyword>
<keyword id="KW-0282">Flagellum</keyword>
<keyword id="KW-1267">Proteomics identification</keyword>
<keyword id="KW-1185">Reference proteome</keyword>
<keyword id="KW-0677">Repeat</keyword>
<protein>
    <recommendedName>
        <fullName>EF-hand domain-containing protein 1</fullName>
    </recommendedName>
    <alternativeName>
        <fullName>Myoclonin-1</fullName>
    </alternativeName>
</protein>
<dbReference type="EMBL" id="AY608689">
    <property type="protein sequence ID" value="AAT67418.1"/>
    <property type="molecule type" value="mRNA"/>
</dbReference>
<dbReference type="EMBL" id="AY608690">
    <property type="protein sequence ID" value="AAT67419.1"/>
    <property type="molecule type" value="mRNA"/>
</dbReference>
<dbReference type="EMBL" id="AK001328">
    <property type="protein sequence ID" value="BAA91628.1"/>
    <property type="molecule type" value="mRNA"/>
</dbReference>
<dbReference type="EMBL" id="AK297632">
    <property type="protein sequence ID" value="BAG60005.1"/>
    <property type="molecule type" value="mRNA"/>
</dbReference>
<dbReference type="EMBL" id="AL049611">
    <property type="status" value="NOT_ANNOTATED_CDS"/>
    <property type="molecule type" value="Genomic_DNA"/>
</dbReference>
<dbReference type="EMBL" id="AL136125">
    <property type="status" value="NOT_ANNOTATED_CDS"/>
    <property type="molecule type" value="Genomic_DNA"/>
</dbReference>
<dbReference type="EMBL" id="BC020210">
    <property type="protein sequence ID" value="AAH20210.1"/>
    <property type="molecule type" value="mRNA"/>
</dbReference>
<dbReference type="CCDS" id="CCDS4942.1">
    <molecule id="Q5JVL4-1"/>
</dbReference>
<dbReference type="CCDS" id="CCDS55021.1">
    <molecule id="Q5JVL4-3"/>
</dbReference>
<dbReference type="RefSeq" id="NP_001165891.1">
    <molecule id="Q5JVL4-3"/>
    <property type="nucleotide sequence ID" value="NM_001172420.2"/>
</dbReference>
<dbReference type="RefSeq" id="NP_060570.2">
    <molecule id="Q5JVL4-1"/>
    <property type="nucleotide sequence ID" value="NM_018100.4"/>
</dbReference>
<dbReference type="PDB" id="7UNG">
    <property type="method" value="EM"/>
    <property type="resolution" value="3.60 A"/>
    <property type="chains" value="T/U/V=1-640"/>
</dbReference>
<dbReference type="PDB" id="8J07">
    <property type="method" value="EM"/>
    <property type="resolution" value="4.10 A"/>
    <property type="chains" value="3A/3B/3C/3D/3E/3F=1-640"/>
</dbReference>
<dbReference type="PDBsum" id="7UNG"/>
<dbReference type="PDBsum" id="8J07"/>
<dbReference type="EMDB" id="EMD-26624"/>
<dbReference type="EMDB" id="EMD-35888"/>
<dbReference type="SMR" id="Q5JVL4"/>
<dbReference type="BioGRID" id="125313">
    <property type="interactions" value="80"/>
</dbReference>
<dbReference type="FunCoup" id="Q5JVL4">
    <property type="interactions" value="113"/>
</dbReference>
<dbReference type="IntAct" id="Q5JVL4">
    <property type="interactions" value="78"/>
</dbReference>
<dbReference type="MINT" id="Q5JVL4"/>
<dbReference type="STRING" id="9606.ENSP00000360107"/>
<dbReference type="GlyGen" id="Q5JVL4">
    <property type="glycosylation" value="1 site"/>
</dbReference>
<dbReference type="iPTMnet" id="Q5JVL4"/>
<dbReference type="PhosphoSitePlus" id="Q5JVL4"/>
<dbReference type="BioMuta" id="EFHC1"/>
<dbReference type="DMDM" id="74762202"/>
<dbReference type="MassIVE" id="Q5JVL4"/>
<dbReference type="PaxDb" id="9606-ENSP00000360107"/>
<dbReference type="PeptideAtlas" id="Q5JVL4"/>
<dbReference type="ProteomicsDB" id="25004"/>
<dbReference type="ProteomicsDB" id="63338">
    <molecule id="Q5JVL4-1"/>
</dbReference>
<dbReference type="ProteomicsDB" id="63339">
    <molecule id="Q5JVL4-2"/>
</dbReference>
<dbReference type="Antibodypedia" id="30907">
    <property type="antibodies" value="166 antibodies from 23 providers"/>
</dbReference>
<dbReference type="DNASU" id="114327"/>
<dbReference type="Ensembl" id="ENST00000371068.11">
    <molecule id="Q5JVL4-1"/>
    <property type="protein sequence ID" value="ENSP00000360107.4"/>
    <property type="gene ID" value="ENSG00000096093.16"/>
</dbReference>
<dbReference type="Ensembl" id="ENST00000538167.2">
    <molecule id="Q5JVL4-3"/>
    <property type="protein sequence ID" value="ENSP00000444521.1"/>
    <property type="gene ID" value="ENSG00000096093.16"/>
</dbReference>
<dbReference type="Ensembl" id="ENST00000636489.1">
    <molecule id="Q5JVL4-3"/>
    <property type="protein sequence ID" value="ENSP00000489998.1"/>
    <property type="gene ID" value="ENSG00000096093.16"/>
</dbReference>
<dbReference type="Ensembl" id="ENST00000636954.1">
    <molecule id="Q5JVL4-3"/>
    <property type="protein sequence ID" value="ENSP00000489966.1"/>
    <property type="gene ID" value="ENSG00000096093.16"/>
</dbReference>
<dbReference type="GeneID" id="114327"/>
<dbReference type="KEGG" id="hsa:114327"/>
<dbReference type="MANE-Select" id="ENST00000371068.11">
    <property type="protein sequence ID" value="ENSP00000360107.4"/>
    <property type="RefSeq nucleotide sequence ID" value="NM_018100.4"/>
    <property type="RefSeq protein sequence ID" value="NP_060570.2"/>
</dbReference>
<dbReference type="UCSC" id="uc003pap.5">
    <molecule id="Q5JVL4-1"/>
    <property type="organism name" value="human"/>
</dbReference>
<dbReference type="AGR" id="HGNC:16406"/>
<dbReference type="CTD" id="114327"/>
<dbReference type="DisGeNET" id="114327"/>
<dbReference type="GeneCards" id="EFHC1"/>
<dbReference type="HGNC" id="HGNC:16406">
    <property type="gene designation" value="EFHC1"/>
</dbReference>
<dbReference type="HPA" id="ENSG00000096093">
    <property type="expression patterns" value="Tissue enhanced (fallopian)"/>
</dbReference>
<dbReference type="MalaCards" id="EFHC1"/>
<dbReference type="MIM" id="254770">
    <property type="type" value="phenotype"/>
</dbReference>
<dbReference type="MIM" id="607631">
    <property type="type" value="phenotype"/>
</dbReference>
<dbReference type="MIM" id="608815">
    <property type="type" value="gene"/>
</dbReference>
<dbReference type="neXtProt" id="NX_Q5JVL4"/>
<dbReference type="OpenTargets" id="ENSG00000096093"/>
<dbReference type="Orphanet" id="1941">
    <property type="disease" value="Juvenile absence epilepsy"/>
</dbReference>
<dbReference type="Orphanet" id="307">
    <property type="disease" value="Juvenile myoclonic epilepsy"/>
</dbReference>
<dbReference type="PharmGKB" id="PA27654"/>
<dbReference type="VEuPathDB" id="HostDB:ENSG00000096093"/>
<dbReference type="eggNOG" id="KOG0043">
    <property type="taxonomic scope" value="Eukaryota"/>
</dbReference>
<dbReference type="GeneTree" id="ENSGT00530000063528"/>
<dbReference type="HOGENOM" id="CLU_1001001_0_0_1"/>
<dbReference type="InParanoid" id="Q5JVL4"/>
<dbReference type="OMA" id="WKDFNIG"/>
<dbReference type="OrthoDB" id="10255210at2759"/>
<dbReference type="PAN-GO" id="Q5JVL4">
    <property type="GO annotations" value="6 GO annotations based on evolutionary models"/>
</dbReference>
<dbReference type="PhylomeDB" id="Q5JVL4"/>
<dbReference type="TreeFam" id="TF314504"/>
<dbReference type="PathwayCommons" id="Q5JVL4"/>
<dbReference type="SignaLink" id="Q5JVL4"/>
<dbReference type="SIGNOR" id="Q5JVL4"/>
<dbReference type="BioGRID-ORCS" id="114327">
    <property type="hits" value="7 hits in 1148 CRISPR screens"/>
</dbReference>
<dbReference type="CD-CODE" id="8C2F96ED">
    <property type="entry name" value="Centrosome"/>
</dbReference>
<dbReference type="ChiTaRS" id="EFHC1">
    <property type="organism name" value="human"/>
</dbReference>
<dbReference type="GeneWiki" id="EFHC1"/>
<dbReference type="GenomeRNAi" id="114327"/>
<dbReference type="Pharos" id="Q5JVL4">
    <property type="development level" value="Tbio"/>
</dbReference>
<dbReference type="PRO" id="PR:Q5JVL4"/>
<dbReference type="Proteomes" id="UP000005640">
    <property type="component" value="Chromosome 6"/>
</dbReference>
<dbReference type="RNAct" id="Q5JVL4">
    <property type="molecule type" value="protein"/>
</dbReference>
<dbReference type="Bgee" id="ENSG00000096093">
    <property type="expression patterns" value="Expressed in bronchial epithelial cell and 187 other cell types or tissues"/>
</dbReference>
<dbReference type="ExpressionAtlas" id="Q5JVL4">
    <property type="expression patterns" value="baseline and differential"/>
</dbReference>
<dbReference type="GO" id="GO:0160111">
    <property type="term" value="C:axonemal A tubule inner sheath"/>
    <property type="evidence" value="ECO:0000250"/>
    <property type="project" value="UniProtKB"/>
</dbReference>
<dbReference type="GO" id="GO:0005879">
    <property type="term" value="C:axonemal microtubule"/>
    <property type="evidence" value="ECO:0000314"/>
    <property type="project" value="UniProtKB"/>
</dbReference>
<dbReference type="GO" id="GO:0005930">
    <property type="term" value="C:axoneme"/>
    <property type="evidence" value="ECO:0000250"/>
    <property type="project" value="UniProtKB"/>
</dbReference>
<dbReference type="GO" id="GO:0005813">
    <property type="term" value="C:centrosome"/>
    <property type="evidence" value="ECO:0000314"/>
    <property type="project" value="UniProtKB"/>
</dbReference>
<dbReference type="GO" id="GO:0072686">
    <property type="term" value="C:mitotic spindle"/>
    <property type="evidence" value="ECO:0000314"/>
    <property type="project" value="UniProtKB"/>
</dbReference>
<dbReference type="GO" id="GO:0043025">
    <property type="term" value="C:neuronal cell body"/>
    <property type="evidence" value="ECO:0000250"/>
    <property type="project" value="UniProtKB"/>
</dbReference>
<dbReference type="GO" id="GO:0036126">
    <property type="term" value="C:sperm flagellum"/>
    <property type="evidence" value="ECO:0000250"/>
    <property type="project" value="UniProtKB"/>
</dbReference>
<dbReference type="GO" id="GO:0000922">
    <property type="term" value="C:spindle pole"/>
    <property type="evidence" value="ECO:0000314"/>
    <property type="project" value="UniProtKB"/>
</dbReference>
<dbReference type="GO" id="GO:0043014">
    <property type="term" value="F:alpha-tubulin binding"/>
    <property type="evidence" value="ECO:0000314"/>
    <property type="project" value="UniProtKB"/>
</dbReference>
<dbReference type="GO" id="GO:0005509">
    <property type="term" value="F:calcium ion binding"/>
    <property type="evidence" value="ECO:0007669"/>
    <property type="project" value="InterPro"/>
</dbReference>
<dbReference type="GO" id="GO:0021795">
    <property type="term" value="P:cerebral cortex cell migration"/>
    <property type="evidence" value="ECO:0000315"/>
    <property type="project" value="UniProtKB"/>
</dbReference>
<dbReference type="GO" id="GO:0060285">
    <property type="term" value="P:cilium-dependent cell motility"/>
    <property type="evidence" value="ECO:0000318"/>
    <property type="project" value="GO_Central"/>
</dbReference>
<dbReference type="GO" id="GO:0030317">
    <property type="term" value="P:flagellated sperm motility"/>
    <property type="evidence" value="ECO:0000250"/>
    <property type="project" value="UniProtKB"/>
</dbReference>
<dbReference type="GO" id="GO:0000281">
    <property type="term" value="P:mitotic cytokinesis"/>
    <property type="evidence" value="ECO:0000315"/>
    <property type="project" value="UniProtKB"/>
</dbReference>
<dbReference type="GO" id="GO:0007052">
    <property type="term" value="P:mitotic spindle organization"/>
    <property type="evidence" value="ECO:0000315"/>
    <property type="project" value="UniProtKB"/>
</dbReference>
<dbReference type="GO" id="GO:0051302">
    <property type="term" value="P:regulation of cell division"/>
    <property type="evidence" value="ECO:0000315"/>
    <property type="project" value="UniProtKB"/>
</dbReference>
<dbReference type="CDD" id="cd00051">
    <property type="entry name" value="EFh"/>
    <property type="match status" value="1"/>
</dbReference>
<dbReference type="FunFam" id="2.30.29.170:FF:000002">
    <property type="entry name" value="EF-hand domain (C-terminal) containing 1"/>
    <property type="match status" value="1"/>
</dbReference>
<dbReference type="FunFam" id="2.30.29.170:FF:000003">
    <property type="entry name" value="EF-hand domain (C-terminal) containing 1"/>
    <property type="match status" value="1"/>
</dbReference>
<dbReference type="FunFam" id="1.10.238.10:FF:000204">
    <property type="entry name" value="EF-hand domain containing 1"/>
    <property type="match status" value="1"/>
</dbReference>
<dbReference type="FunFam" id="2.30.29.170:FF:000001">
    <property type="entry name" value="EF-hand domain containing 1"/>
    <property type="match status" value="1"/>
</dbReference>
<dbReference type="Gene3D" id="2.30.29.170">
    <property type="match status" value="3"/>
</dbReference>
<dbReference type="Gene3D" id="1.10.238.10">
    <property type="entry name" value="EF-hand"/>
    <property type="match status" value="1"/>
</dbReference>
<dbReference type="InterPro" id="IPR006602">
    <property type="entry name" value="DM10_dom"/>
</dbReference>
<dbReference type="InterPro" id="IPR011992">
    <property type="entry name" value="EF-hand-dom_pair"/>
</dbReference>
<dbReference type="InterPro" id="IPR002048">
    <property type="entry name" value="EF_hand_dom"/>
</dbReference>
<dbReference type="InterPro" id="IPR040193">
    <property type="entry name" value="EFHC1/EFHC2/EFHB"/>
</dbReference>
<dbReference type="PANTHER" id="PTHR12086">
    <property type="entry name" value="EF-HAND DOMAIN C-TERMINAL CONTAINING PROTEIN"/>
    <property type="match status" value="1"/>
</dbReference>
<dbReference type="PANTHER" id="PTHR12086:SF9">
    <property type="entry name" value="EF-HAND DOMAIN-CONTAINING PROTEIN 1"/>
    <property type="match status" value="1"/>
</dbReference>
<dbReference type="Pfam" id="PF06565">
    <property type="entry name" value="DM10_dom"/>
    <property type="match status" value="3"/>
</dbReference>
<dbReference type="SMART" id="SM00676">
    <property type="entry name" value="DM10"/>
    <property type="match status" value="3"/>
</dbReference>
<dbReference type="SUPFAM" id="SSF47473">
    <property type="entry name" value="EF-hand"/>
    <property type="match status" value="1"/>
</dbReference>
<dbReference type="PROSITE" id="PS51336">
    <property type="entry name" value="DM10"/>
    <property type="match status" value="3"/>
</dbReference>
<dbReference type="PROSITE" id="PS50222">
    <property type="entry name" value="EF_HAND_2"/>
    <property type="match status" value="1"/>
</dbReference>
<gene>
    <name evidence="19" type="primary">EFHC1</name>
</gene>
<accession>Q5JVL4</accession>
<accession>B4DMU3</accession>
<accession>F5GZD8</accession>
<accession>Q5XKM4</accession>
<accession>Q6E1U7</accession>
<accession>Q6E1U8</accession>
<accession>Q8WUL2</accession>
<accession>Q9NVW6</accession>
<name>EFHC1_HUMAN</name>
<reference key="1">
    <citation type="journal article" date="2004" name="Nat. Genet.">
        <title>Mutations in EFHC1 cause juvenile myoclonic epilepsy.</title>
        <authorList>
            <person name="Suzuki T."/>
            <person name="Delgado-Escueta A.V."/>
            <person name="Aguan K."/>
            <person name="Alonso M.E."/>
            <person name="Shi J."/>
            <person name="Hara Y."/>
            <person name="Nishida M."/>
            <person name="Numata T."/>
            <person name="Medina M.T."/>
            <person name="Takeuchi T."/>
            <person name="Morita R."/>
            <person name="Bai D."/>
            <person name="Ganesh S."/>
            <person name="Sugimoto Y."/>
            <person name="Inazawa J."/>
            <person name="Bailey J.N."/>
            <person name="Ochoa A."/>
            <person name="Jara-Prado A."/>
            <person name="Rasmussen A."/>
            <person name="Ramos-Peek J."/>
            <person name="Cordova S."/>
            <person name="Rubio-Donnadieu F."/>
            <person name="Inoue Y."/>
            <person name="Osawa M."/>
            <person name="Kaneko S."/>
            <person name="Oguni H."/>
            <person name="Mori Y."/>
            <person name="Yamakawa K."/>
        </authorList>
    </citation>
    <scope>NUCLEOTIDE SEQUENCE [MRNA] (ISOFORM 2)</scope>
    <scope>NUCLEOTIDE SEQUENCE [MRNA] OF 557-640 (ISOFORM 1)</scope>
    <scope>FUNCTION</scope>
    <scope>INTERACTION WITH CACNA1E</scope>
    <scope>TISSUE SPECIFICITY</scope>
    <scope>VARIANTS EJM1 THR-77; ASN-210; HIS-221; LEU-229 AND TYR-253</scope>
    <scope>CHARACTERIZATION OF VARIANTS EJM1 THR-77; ASN-210; HIS-221; LEU-229 AND TYR-253</scope>
    <scope>VARIANTS TRP-159; HIS-182 AND LEU-619</scope>
    <scope>CHARACTERIZATION OF VARIANTS TRP-159; HIS-182 AND LEU-619</scope>
</reference>
<reference key="2">
    <citation type="journal article" date="2004" name="Nat. Genet.">
        <title>Complete sequencing and characterization of 21,243 full-length human cDNAs.</title>
        <authorList>
            <person name="Ota T."/>
            <person name="Suzuki Y."/>
            <person name="Nishikawa T."/>
            <person name="Otsuki T."/>
            <person name="Sugiyama T."/>
            <person name="Irie R."/>
            <person name="Wakamatsu A."/>
            <person name="Hayashi K."/>
            <person name="Sato H."/>
            <person name="Nagai K."/>
            <person name="Kimura K."/>
            <person name="Makita H."/>
            <person name="Sekine M."/>
            <person name="Obayashi M."/>
            <person name="Nishi T."/>
            <person name="Shibahara T."/>
            <person name="Tanaka T."/>
            <person name="Ishii S."/>
            <person name="Yamamoto J."/>
            <person name="Saito K."/>
            <person name="Kawai Y."/>
            <person name="Isono Y."/>
            <person name="Nakamura Y."/>
            <person name="Nagahari K."/>
            <person name="Murakami K."/>
            <person name="Yasuda T."/>
            <person name="Iwayanagi T."/>
            <person name="Wagatsuma M."/>
            <person name="Shiratori A."/>
            <person name="Sudo H."/>
            <person name="Hosoiri T."/>
            <person name="Kaku Y."/>
            <person name="Kodaira H."/>
            <person name="Kondo H."/>
            <person name="Sugawara M."/>
            <person name="Takahashi M."/>
            <person name="Kanda K."/>
            <person name="Yokoi T."/>
            <person name="Furuya T."/>
            <person name="Kikkawa E."/>
            <person name="Omura Y."/>
            <person name="Abe K."/>
            <person name="Kamihara K."/>
            <person name="Katsuta N."/>
            <person name="Sato K."/>
            <person name="Tanikawa M."/>
            <person name="Yamazaki M."/>
            <person name="Ninomiya K."/>
            <person name="Ishibashi T."/>
            <person name="Yamashita H."/>
            <person name="Murakawa K."/>
            <person name="Fujimori K."/>
            <person name="Tanai H."/>
            <person name="Kimata M."/>
            <person name="Watanabe M."/>
            <person name="Hiraoka S."/>
            <person name="Chiba Y."/>
            <person name="Ishida S."/>
            <person name="Ono Y."/>
            <person name="Takiguchi S."/>
            <person name="Watanabe S."/>
            <person name="Yosida M."/>
            <person name="Hotuta T."/>
            <person name="Kusano J."/>
            <person name="Kanehori K."/>
            <person name="Takahashi-Fujii A."/>
            <person name="Hara H."/>
            <person name="Tanase T.-O."/>
            <person name="Nomura Y."/>
            <person name="Togiya S."/>
            <person name="Komai F."/>
            <person name="Hara R."/>
            <person name="Takeuchi K."/>
            <person name="Arita M."/>
            <person name="Imose N."/>
            <person name="Musashino K."/>
            <person name="Yuuki H."/>
            <person name="Oshima A."/>
            <person name="Sasaki N."/>
            <person name="Aotsuka S."/>
            <person name="Yoshikawa Y."/>
            <person name="Matsunawa H."/>
            <person name="Ichihara T."/>
            <person name="Shiohata N."/>
            <person name="Sano S."/>
            <person name="Moriya S."/>
            <person name="Momiyama H."/>
            <person name="Satoh N."/>
            <person name="Takami S."/>
            <person name="Terashima Y."/>
            <person name="Suzuki O."/>
            <person name="Nakagawa S."/>
            <person name="Senoh A."/>
            <person name="Mizoguchi H."/>
            <person name="Goto Y."/>
            <person name="Shimizu F."/>
            <person name="Wakebe H."/>
            <person name="Hishigaki H."/>
            <person name="Watanabe T."/>
            <person name="Sugiyama A."/>
            <person name="Takemoto M."/>
            <person name="Kawakami B."/>
            <person name="Yamazaki M."/>
            <person name="Watanabe K."/>
            <person name="Kumagai A."/>
            <person name="Itakura S."/>
            <person name="Fukuzumi Y."/>
            <person name="Fujimori Y."/>
            <person name="Komiyama M."/>
            <person name="Tashiro H."/>
            <person name="Tanigami A."/>
            <person name="Fujiwara T."/>
            <person name="Ono T."/>
            <person name="Yamada K."/>
            <person name="Fujii Y."/>
            <person name="Ozaki K."/>
            <person name="Hirao M."/>
            <person name="Ohmori Y."/>
            <person name="Kawabata A."/>
            <person name="Hikiji T."/>
            <person name="Kobatake N."/>
            <person name="Inagaki H."/>
            <person name="Ikema Y."/>
            <person name="Okamoto S."/>
            <person name="Okitani R."/>
            <person name="Kawakami T."/>
            <person name="Noguchi S."/>
            <person name="Itoh T."/>
            <person name="Shigeta K."/>
            <person name="Senba T."/>
            <person name="Matsumura K."/>
            <person name="Nakajima Y."/>
            <person name="Mizuno T."/>
            <person name="Morinaga M."/>
            <person name="Sasaki M."/>
            <person name="Togashi T."/>
            <person name="Oyama M."/>
            <person name="Hata H."/>
            <person name="Watanabe M."/>
            <person name="Komatsu T."/>
            <person name="Mizushima-Sugano J."/>
            <person name="Satoh T."/>
            <person name="Shirai Y."/>
            <person name="Takahashi Y."/>
            <person name="Nakagawa K."/>
            <person name="Okumura K."/>
            <person name="Nagase T."/>
            <person name="Nomura N."/>
            <person name="Kikuchi H."/>
            <person name="Masuho Y."/>
            <person name="Yamashita R."/>
            <person name="Nakai K."/>
            <person name="Yada T."/>
            <person name="Nakamura Y."/>
            <person name="Ohara O."/>
            <person name="Isogai T."/>
            <person name="Sugano S."/>
        </authorList>
    </citation>
    <scope>NUCLEOTIDE SEQUENCE [LARGE SCALE MRNA] (ISOFORMS 1 AND 3)</scope>
    <source>
        <tissue>Brain</tissue>
    </source>
</reference>
<reference key="3">
    <citation type="journal article" date="2003" name="Nature">
        <title>The DNA sequence and analysis of human chromosome 6.</title>
        <authorList>
            <person name="Mungall A.J."/>
            <person name="Palmer S.A."/>
            <person name="Sims S.K."/>
            <person name="Edwards C.A."/>
            <person name="Ashurst J.L."/>
            <person name="Wilming L."/>
            <person name="Jones M.C."/>
            <person name="Horton R."/>
            <person name="Hunt S.E."/>
            <person name="Scott C.E."/>
            <person name="Gilbert J.G.R."/>
            <person name="Clamp M.E."/>
            <person name="Bethel G."/>
            <person name="Milne S."/>
            <person name="Ainscough R."/>
            <person name="Almeida J.P."/>
            <person name="Ambrose K.D."/>
            <person name="Andrews T.D."/>
            <person name="Ashwell R.I.S."/>
            <person name="Babbage A.K."/>
            <person name="Bagguley C.L."/>
            <person name="Bailey J."/>
            <person name="Banerjee R."/>
            <person name="Barker D.J."/>
            <person name="Barlow K.F."/>
            <person name="Bates K."/>
            <person name="Beare D.M."/>
            <person name="Beasley H."/>
            <person name="Beasley O."/>
            <person name="Bird C.P."/>
            <person name="Blakey S.E."/>
            <person name="Bray-Allen S."/>
            <person name="Brook J."/>
            <person name="Brown A.J."/>
            <person name="Brown J.Y."/>
            <person name="Burford D.C."/>
            <person name="Burrill W."/>
            <person name="Burton J."/>
            <person name="Carder C."/>
            <person name="Carter N.P."/>
            <person name="Chapman J.C."/>
            <person name="Clark S.Y."/>
            <person name="Clark G."/>
            <person name="Clee C.M."/>
            <person name="Clegg S."/>
            <person name="Cobley V."/>
            <person name="Collier R.E."/>
            <person name="Collins J.E."/>
            <person name="Colman L.K."/>
            <person name="Corby N.R."/>
            <person name="Coville G.J."/>
            <person name="Culley K.M."/>
            <person name="Dhami P."/>
            <person name="Davies J."/>
            <person name="Dunn M."/>
            <person name="Earthrowl M.E."/>
            <person name="Ellington A.E."/>
            <person name="Evans K.A."/>
            <person name="Faulkner L."/>
            <person name="Francis M.D."/>
            <person name="Frankish A."/>
            <person name="Frankland J."/>
            <person name="French L."/>
            <person name="Garner P."/>
            <person name="Garnett J."/>
            <person name="Ghori M.J."/>
            <person name="Gilby L.M."/>
            <person name="Gillson C.J."/>
            <person name="Glithero R.J."/>
            <person name="Grafham D.V."/>
            <person name="Grant M."/>
            <person name="Gribble S."/>
            <person name="Griffiths C."/>
            <person name="Griffiths M.N.D."/>
            <person name="Hall R."/>
            <person name="Halls K.S."/>
            <person name="Hammond S."/>
            <person name="Harley J.L."/>
            <person name="Hart E.A."/>
            <person name="Heath P.D."/>
            <person name="Heathcott R."/>
            <person name="Holmes S.J."/>
            <person name="Howden P.J."/>
            <person name="Howe K.L."/>
            <person name="Howell G.R."/>
            <person name="Huckle E."/>
            <person name="Humphray S.J."/>
            <person name="Humphries M.D."/>
            <person name="Hunt A.R."/>
            <person name="Johnson C.M."/>
            <person name="Joy A.A."/>
            <person name="Kay M."/>
            <person name="Keenan S.J."/>
            <person name="Kimberley A.M."/>
            <person name="King A."/>
            <person name="Laird G.K."/>
            <person name="Langford C."/>
            <person name="Lawlor S."/>
            <person name="Leongamornlert D.A."/>
            <person name="Leversha M."/>
            <person name="Lloyd C.R."/>
            <person name="Lloyd D.M."/>
            <person name="Loveland J.E."/>
            <person name="Lovell J."/>
            <person name="Martin S."/>
            <person name="Mashreghi-Mohammadi M."/>
            <person name="Maslen G.L."/>
            <person name="Matthews L."/>
            <person name="McCann O.T."/>
            <person name="McLaren S.J."/>
            <person name="McLay K."/>
            <person name="McMurray A."/>
            <person name="Moore M.J.F."/>
            <person name="Mullikin J.C."/>
            <person name="Niblett D."/>
            <person name="Nickerson T."/>
            <person name="Novik K.L."/>
            <person name="Oliver K."/>
            <person name="Overton-Larty E.K."/>
            <person name="Parker A."/>
            <person name="Patel R."/>
            <person name="Pearce A.V."/>
            <person name="Peck A.I."/>
            <person name="Phillimore B.J.C.T."/>
            <person name="Phillips S."/>
            <person name="Plumb R.W."/>
            <person name="Porter K.M."/>
            <person name="Ramsey Y."/>
            <person name="Ranby S.A."/>
            <person name="Rice C.M."/>
            <person name="Ross M.T."/>
            <person name="Searle S.M."/>
            <person name="Sehra H.K."/>
            <person name="Sheridan E."/>
            <person name="Skuce C.D."/>
            <person name="Smith S."/>
            <person name="Smith M."/>
            <person name="Spraggon L."/>
            <person name="Squares S.L."/>
            <person name="Steward C.A."/>
            <person name="Sycamore N."/>
            <person name="Tamlyn-Hall G."/>
            <person name="Tester J."/>
            <person name="Theaker A.J."/>
            <person name="Thomas D.W."/>
            <person name="Thorpe A."/>
            <person name="Tracey A."/>
            <person name="Tromans A."/>
            <person name="Tubby B."/>
            <person name="Wall M."/>
            <person name="Wallis J.M."/>
            <person name="West A.P."/>
            <person name="White S.S."/>
            <person name="Whitehead S.L."/>
            <person name="Whittaker H."/>
            <person name="Wild A."/>
            <person name="Willey D.J."/>
            <person name="Wilmer T.E."/>
            <person name="Wood J.M."/>
            <person name="Wray P.W."/>
            <person name="Wyatt J.C."/>
            <person name="Young L."/>
            <person name="Younger R.M."/>
            <person name="Bentley D.R."/>
            <person name="Coulson A."/>
            <person name="Durbin R.M."/>
            <person name="Hubbard T."/>
            <person name="Sulston J.E."/>
            <person name="Dunham I."/>
            <person name="Rogers J."/>
            <person name="Beck S."/>
        </authorList>
    </citation>
    <scope>NUCLEOTIDE SEQUENCE [LARGE SCALE GENOMIC DNA]</scope>
</reference>
<reference key="4">
    <citation type="journal article" date="2004" name="Genome Res.">
        <title>The status, quality, and expansion of the NIH full-length cDNA project: the Mammalian Gene Collection (MGC).</title>
        <authorList>
            <consortium name="The MGC Project Team"/>
        </authorList>
    </citation>
    <scope>NUCLEOTIDE SEQUENCE [LARGE SCALE MRNA] (ISOFORM 1)</scope>
    <scope>VARIANTS ILE-285 AND LEU-619</scope>
    <source>
        <tissue>Kidney</tissue>
    </source>
</reference>
<reference key="5">
    <citation type="journal article" date="2006" name="Neurology">
        <title>Idiopathic generalized epilepsy phenotypes associated with different EFHC1 mutations.</title>
        <authorList>
            <person name="Stogmann E."/>
            <person name="Lichtner P."/>
            <person name="Baumgartner C."/>
            <person name="Bonelli S."/>
            <person name="Assem-Hilger E."/>
            <person name="Leutmezer F."/>
            <person name="Schmied M."/>
            <person name="Hotzy C."/>
            <person name="Strom T.M."/>
            <person name="Meitinger T."/>
            <person name="Zimprich F."/>
            <person name="Zimprich A."/>
        </authorList>
    </citation>
    <scope>INVOLVEMENT IN JAE1</scope>
    <scope>VARIANTS TRP-159; VAL-174; HIS-182; LEU-229; TYR-259; HIS-294; SER-394 AND THR-448</scope>
</reference>
<reference key="6">
    <citation type="journal article" date="2007" name="Epilepsia">
        <title>Mutational analysis of EFHC1 gene in Italian families with juvenile myoclonic epilepsy.</title>
        <authorList>
            <person name="Annesi F."/>
            <person name="Gambardella A."/>
            <person name="Michelucci R."/>
            <person name="Bianchi A."/>
            <person name="Marini C."/>
            <person name="Canevini M.P."/>
            <person name="Capovilla G."/>
            <person name="Elia M."/>
            <person name="Buti D."/>
            <person name="Chifari R."/>
            <person name="Striano P."/>
            <person name="Rocca F.E."/>
            <person name="Castellotti B."/>
            <person name="Cali F."/>
            <person name="Labate A."/>
            <person name="Lepiane E."/>
            <person name="Besana D."/>
            <person name="Sofia V."/>
            <person name="Tabiadon G."/>
            <person name="Tortorella G."/>
            <person name="Vigliano P."/>
            <person name="Vignoli A."/>
            <person name="Beccaria F."/>
            <person name="Annesi G."/>
            <person name="Striano S."/>
            <person name="Aguglia U."/>
            <person name="Guerrini R."/>
            <person name="Quattrone A."/>
        </authorList>
    </citation>
    <scope>INVOLVEMENT IN EJM1</scope>
    <scope>VARIANTS EJM1 LEU-229 AND TRP-353</scope>
    <scope>VARIANT HIS-182</scope>
</reference>
<reference key="7">
    <citation type="journal article" date="2009" name="Nat. Neurosci.">
        <title>EFHC1 interacts with microtubules to regulate cell division and cortical development.</title>
        <authorList>
            <person name="de Nijs L."/>
            <person name="Leon C."/>
            <person name="Nguyen L."/>
            <person name="Loturco J.J."/>
            <person name="Delgado-Escueta A.V."/>
            <person name="Grisar T."/>
            <person name="Lakaye B."/>
        </authorList>
    </citation>
    <scope>FUNCTION</scope>
    <scope>SUBCELLULAR LOCATION</scope>
    <scope>INTERACTION WITH ALPHA-TUBULIN</scope>
</reference>
<reference evidence="20" key="8">
    <citation type="journal article" date="2022" name="Proc. Natl. Acad. Sci. U.S.A.">
        <title>SPACA9 is a lumenal protein of human ciliary singlet and doublet microtubules.</title>
        <authorList>
            <person name="Gui M."/>
            <person name="Croft J.T."/>
            <person name="Zabeo D."/>
            <person name="Acharya V."/>
            <person name="Kollman J.M."/>
            <person name="Burgoyne T."/>
            <person name="Hoog J.L."/>
            <person name="Brown A."/>
        </authorList>
    </citation>
    <scope>STRUCTURE BY ELECTRON MICROSCOPY (3.60 ANGSTROMS)</scope>
    <scope>FUNCTION</scope>
    <scope>SUBCELLULAR LOCATION</scope>
    <scope>TISSUE SPECIFICITY</scope>
</reference>
<reference key="9">
    <citation type="journal article" date="2012" name="Hum. Mol. Genet.">
        <title>Mutations of EFHC1, linked to juvenile myoclonic epilepsy, disrupt radial and tangential migrations during brain development.</title>
        <authorList>
            <person name="de Nijs L."/>
            <person name="Wolkoff N."/>
            <person name="Coumans B."/>
            <person name="Delgado-Escueta A.V."/>
            <person name="Grisar T."/>
            <person name="Lakaye B."/>
        </authorList>
    </citation>
    <scope>FUNCTION</scope>
    <scope>SUBCELLULAR LOCATION</scope>
    <scope>CHARACTERIZATION OF VARIANTS EJM1 ASN-210; HIS-221; LEU-229 AND TYR-253</scope>
    <scope>CHARACTERIZATION OF VARIANTS TRP-159 AND LEU-619</scope>
</reference>
<reference key="10">
    <citation type="journal article" date="2012" name="Epilepsia">
        <title>Intractable epilepsy of infancy due to homozygous mutation in the EFHC1 gene.</title>
        <authorList>
            <person name="Berger I."/>
            <person name="Dor T."/>
            <person name="Halvardson J."/>
            <person name="Edvardson S."/>
            <person name="Shaag A."/>
            <person name="Feuk L."/>
            <person name="Elpeleg O."/>
        </authorList>
    </citation>
    <scope>VARIANT EJM1 LEU-229</scope>
    <scope>POSSIBLE INVOLVEMENT IN INTRACTABLE EPILEPSY OF INFANCY</scope>
</reference>
<reference key="11">
    <citation type="journal article" date="2012" name="Seizure">
        <title>Novel Myoclonin1/EFHC1 mutations in Mexican patients with juvenile myoclonic epilepsy.</title>
        <authorList>
            <person name="Jara-Prado A."/>
            <person name="Martinez-Juarez I.E."/>
            <person name="Ochoa A."/>
            <person name="Gonzalez V.M."/>
            <person name="Fernandez-Gonzalez-Aragon M.C."/>
            <person name="Lopez-Ruiz M."/>
            <person name="Medina M.T."/>
            <person name="Bailey J.N."/>
            <person name="Delgado-Escueta A.V."/>
            <person name="Alonso M.E."/>
        </authorList>
    </citation>
    <scope>VARIANTS EJM1 CYS-118; GLN-153 AND CYS-182</scope>
</reference>
<reference key="12">
    <citation type="journal article" date="2017" name="Hum. Mutat.">
        <title>Microtubule-associated defects caused by EFHC1 mutations in juvenile myoclonic epilepsy.</title>
        <authorList>
            <person name="Raju P.K."/>
            <person name="Satishchandra P."/>
            <person name="Nayak S."/>
            <person name="Iyer V."/>
            <person name="Sinha S."/>
            <person name="Anand A."/>
        </authorList>
    </citation>
    <scope>VARIANTS EJM1 ARG-89; LEU-229; LYS-322; TRP-353; CYS-355; TRP-372; GLU-378; CYS-436; HIS-485; SER-519; LEU-556; SER-619 AND CYS-631</scope>
    <scope>CHARACTERIZATION OF VARIANTS EJM1 ARG-89; LYS-322; TRP-353; CYS-355; TRP-372; GLU-378; CYS-436; HIS-485; SER-519; LEU-556; SER-619 AND CYS-631</scope>
    <scope>VARIANTS TRP-159; HIS-182; CYS-221; HIS-294; THR-448 AND LEU-619</scope>
    <scope>FUNCTION</scope>
    <scope>SUBCELLULAR LOCATION</scope>
</reference>